<sequence>MSPKMVAPPTNLHFVLFPLMAQGHLVPMVDIARILAQRGATVTIITTPYHANRVRPVISRAIATNLKIQLLELQLRSTEAGLPEGCESFDQLPSFEYWKNISTAIDLLQQPAEDLLRELSPPPDCIISDFLFPWTTDVARRLNIPRLVFNGPGCFYLLCIHVAITSNILGENEPVSSNTERVVLPGLPDRIEVTKLQIVGSSRPANVDEMGSWLRAVEAEKASFGIVVNTFEELEPEYVEEYKTVKDKKMWCIGPVSLCNKTGPDLAERGNKAAITEHNCLKWLDERKLGSVLYVCLGSLARISAAQAIELGLGLESINRPFIWCVRNETDELKTWFLDGFEERVRDRGLIVHGWAPQVLILSHPTIGGFLTHCGWNSTIESITAGVPMITWPFFADQFLNEAFIVEVLKIGVRIGVERACLFGEEDKVGVLVKKEDVKKAVECLMDEDEDGDQRRKRVIELAKMAKIAMAEGGSSYENVSSLIRDVTETVRAPH</sequence>
<keyword id="KW-0328">Glycosyltransferase</keyword>
<keyword id="KW-0808">Transferase</keyword>
<dbReference type="EC" id="2.4.1.-" evidence="4"/>
<dbReference type="EMBL" id="AY345979">
    <property type="protein sequence ID" value="AAR06917.1"/>
    <property type="molecule type" value="mRNA"/>
</dbReference>
<dbReference type="SMR" id="Q6VAA9"/>
<dbReference type="CAZy" id="GT1">
    <property type="family name" value="Glycosyltransferase Family 1"/>
</dbReference>
<dbReference type="GO" id="GO:0035251">
    <property type="term" value="F:UDP-glucosyltransferase activity"/>
    <property type="evidence" value="ECO:0007669"/>
    <property type="project" value="TreeGrafter"/>
</dbReference>
<dbReference type="CDD" id="cd03784">
    <property type="entry name" value="GT1_Gtf-like"/>
    <property type="match status" value="1"/>
</dbReference>
<dbReference type="FunFam" id="3.40.50.2000:FF:000047">
    <property type="entry name" value="Glycosyltransferase"/>
    <property type="match status" value="1"/>
</dbReference>
<dbReference type="FunFam" id="3.40.50.2000:FF:000071">
    <property type="entry name" value="Glycosyltransferase"/>
    <property type="match status" value="1"/>
</dbReference>
<dbReference type="Gene3D" id="3.40.50.2000">
    <property type="entry name" value="Glycogen Phosphorylase B"/>
    <property type="match status" value="2"/>
</dbReference>
<dbReference type="InterPro" id="IPR002213">
    <property type="entry name" value="UDP_glucos_trans"/>
</dbReference>
<dbReference type="InterPro" id="IPR035595">
    <property type="entry name" value="UDP_glycos_trans_CS"/>
</dbReference>
<dbReference type="PANTHER" id="PTHR48047">
    <property type="entry name" value="GLYCOSYLTRANSFERASE"/>
    <property type="match status" value="1"/>
</dbReference>
<dbReference type="PANTHER" id="PTHR48047:SF60">
    <property type="entry name" value="GLYCOSYLTRANSFERASE"/>
    <property type="match status" value="1"/>
</dbReference>
<dbReference type="Pfam" id="PF00201">
    <property type="entry name" value="UDPGT"/>
    <property type="match status" value="1"/>
</dbReference>
<dbReference type="SUPFAM" id="SSF53756">
    <property type="entry name" value="UDP-Glycosyltransferase/glycogen phosphorylase"/>
    <property type="match status" value="1"/>
</dbReference>
<dbReference type="PROSITE" id="PS00375">
    <property type="entry name" value="UDPGT"/>
    <property type="match status" value="1"/>
</dbReference>
<protein>
    <recommendedName>
        <fullName evidence="3">UDP-glycosyltransferase 73E1</fullName>
        <ecNumber evidence="4">2.4.1.-</ecNumber>
    </recommendedName>
</protein>
<comment type="function">
    <text evidence="1">May glycosylate diterpenes or flavonols in leaves.</text>
</comment>
<comment type="similarity">
    <text evidence="4">Belongs to the UDP-glycosyltransferase family.</text>
</comment>
<evidence type="ECO:0000250" key="1">
    <source>
        <dbReference type="UniProtKB" id="Q6VAA6"/>
    </source>
</evidence>
<evidence type="ECO:0000250" key="2">
    <source>
        <dbReference type="UniProtKB" id="Q9M156"/>
    </source>
</evidence>
<evidence type="ECO:0000303" key="3">
    <source>
    </source>
</evidence>
<evidence type="ECO:0000305" key="4"/>
<feature type="chain" id="PRO_0000434463" description="UDP-glycosyltransferase 73E1">
    <location>
        <begin position="1"/>
        <end position="495"/>
    </location>
</feature>
<feature type="binding site" evidence="2">
    <location>
        <position position="299"/>
    </location>
    <ligand>
        <name>UDP-alpha-D-glucose</name>
        <dbReference type="ChEBI" id="CHEBI:58885"/>
    </ligand>
</feature>
<feature type="binding site" evidence="2">
    <location>
        <begin position="355"/>
        <end position="356"/>
    </location>
    <ligand>
        <name>UDP-alpha-D-glucose</name>
        <dbReference type="ChEBI" id="CHEBI:58885"/>
    </ligand>
</feature>
<feature type="binding site" evidence="2">
    <location>
        <begin position="373"/>
        <end position="381"/>
    </location>
    <ligand>
        <name>UDP-alpha-D-glucose</name>
        <dbReference type="ChEBI" id="CHEBI:58885"/>
    </ligand>
</feature>
<feature type="binding site" evidence="2">
    <location>
        <begin position="395"/>
        <end position="398"/>
    </location>
    <ligand>
        <name>UDP-alpha-D-glucose</name>
        <dbReference type="ChEBI" id="CHEBI:58885"/>
    </ligand>
</feature>
<name>U73E1_STERE</name>
<reference key="1">
    <citation type="journal article" date="2005" name="Plant J.">
        <title>Functional genomics uncovers three glucosyltransferases involved in the synthesis of the major sweet glucosides of Stevia rebaudiana.</title>
        <authorList>
            <person name="Richman A."/>
            <person name="Swanson A."/>
            <person name="Humphrey T."/>
            <person name="Chapman R."/>
            <person name="McGarvey B."/>
            <person name="Pocs R."/>
            <person name="Brandle J."/>
        </authorList>
    </citation>
    <scope>NUCLEOTIDE SEQUENCE [MRNA]</scope>
    <source>
        <tissue>Leaf</tissue>
    </source>
</reference>
<proteinExistence type="evidence at transcript level"/>
<organism>
    <name type="scientific">Stevia rebaudiana</name>
    <name type="common">Stevia</name>
    <name type="synonym">Eupatorium rebaudianum</name>
    <dbReference type="NCBI Taxonomy" id="55670"/>
    <lineage>
        <taxon>Eukaryota</taxon>
        <taxon>Viridiplantae</taxon>
        <taxon>Streptophyta</taxon>
        <taxon>Embryophyta</taxon>
        <taxon>Tracheophyta</taxon>
        <taxon>Spermatophyta</taxon>
        <taxon>Magnoliopsida</taxon>
        <taxon>eudicotyledons</taxon>
        <taxon>Gunneridae</taxon>
        <taxon>Pentapetalae</taxon>
        <taxon>asterids</taxon>
        <taxon>campanulids</taxon>
        <taxon>Asterales</taxon>
        <taxon>Asteraceae</taxon>
        <taxon>Asteroideae</taxon>
        <taxon>Heliantheae alliance</taxon>
        <taxon>Eupatorieae</taxon>
        <taxon>Stevia</taxon>
    </lineage>
</organism>
<accession>Q6VAA9</accession>
<gene>
    <name evidence="3" type="primary">UGT73E1</name>
</gene>